<sequence length="733" mass="78749">MALSEDEAEAEVSVNTKVPSCGRWNSGKLLPSGLEPDQPLHLGVEGGPLWRAEADPGCISGVFLSRVHTASKEPVADRSKPPLRGPLPSASVGTGEVLHSMGSQMEEDRLPASQDLLPALQVFGTITVCSGQEADSEDFQATLDPSQVLGLSQQPHTSGLPLPPQWKSTVSPGAPQLSSRSISASSVGSSLQDHQEKAGPQRASFANVSSPELTVPQAAHSVVGAGPPLQGSAQPLTSGSDATGLGKRHLSFQAEYWACALPNSLPPSPNRHSALWDPNKEYEDLLDYTYPLRPGPQLPKQPESHVLTEPVLQDSGVDLDSLSVSPASTLKSPTNVSHNCSSAEVPTLPFSGARESCLKRWPLGIFQKQGGTSLSSWNQLASTPRAPGTEDASWENREAALRGTAEDCLPIGEDLRMGSPQLKTKEKEPPFPRQKRGRQHVSCPACVTPGWPSEEEVGSDEEYLALPTRLTQVSSLVSYSGARPSFVNLHTGAAEEHSSLQVSDSDKPASPTLDSSHRKHPSGTSFQGPVGQNPCFRHSIQPQDSRGKSSLMSNQTLGVSSKPLKTQPASKAMTDRRLFSELVAGETLPRTTDEQEKASLVQCVQTFCCRLEELICWLYNVTDVADLSAPPRTSLTGLKSSLQLYRQFKKDVDEHQSLTESVLEKGEILLQCLLDNTPVLKDVLERIAKQSGELESRADHLYDSILASLDMLAGCTLIPDNRPTAAEHPHEGL</sequence>
<dbReference type="EMBL" id="AK031622">
    <property type="protein sequence ID" value="BAC27484.1"/>
    <property type="molecule type" value="mRNA"/>
</dbReference>
<dbReference type="EMBL" id="AK140820">
    <property type="protein sequence ID" value="BAE24488.1"/>
    <property type="molecule type" value="mRNA"/>
</dbReference>
<dbReference type="EMBL" id="AL606522">
    <property type="status" value="NOT_ANNOTATED_CDS"/>
    <property type="molecule type" value="Genomic_DNA"/>
</dbReference>
<dbReference type="EMBL" id="BC027174">
    <property type="protein sequence ID" value="AAH27174.1"/>
    <property type="molecule type" value="mRNA"/>
</dbReference>
<dbReference type="CCDS" id="CCDS24456.1">
    <molecule id="Q8C0D9-1"/>
</dbReference>
<dbReference type="RefSeq" id="NP_758464.2">
    <molecule id="Q8C0D9-1"/>
    <property type="nucleotide sequence ID" value="NM_172260.3"/>
</dbReference>
<dbReference type="SMR" id="Q8C0D9"/>
<dbReference type="FunCoup" id="Q8C0D9">
    <property type="interactions" value="2277"/>
</dbReference>
<dbReference type="STRING" id="10090.ENSMUSP00000054943"/>
<dbReference type="GlyGen" id="Q8C0D9">
    <property type="glycosylation" value="1 site"/>
</dbReference>
<dbReference type="iPTMnet" id="Q8C0D9"/>
<dbReference type="PhosphoSitePlus" id="Q8C0D9"/>
<dbReference type="PaxDb" id="10090-ENSMUSP00000054943"/>
<dbReference type="PeptideAtlas" id="Q8C0D9"/>
<dbReference type="ProteomicsDB" id="280069">
    <molecule id="Q8C0D9-1"/>
</dbReference>
<dbReference type="ProteomicsDB" id="280070">
    <molecule id="Q8C0D9-2"/>
</dbReference>
<dbReference type="Pumba" id="Q8C0D9"/>
<dbReference type="Antibodypedia" id="47440">
    <property type="antibodies" value="222 antibodies from 24 providers"/>
</dbReference>
<dbReference type="DNASU" id="216543"/>
<dbReference type="Ensembl" id="ENSMUST00000050611.14">
    <molecule id="Q8C0D9-1"/>
    <property type="protein sequence ID" value="ENSMUSP00000054943.8"/>
    <property type="gene ID" value="ENSMUSG00000044066.15"/>
</dbReference>
<dbReference type="Ensembl" id="ENSMUST00000109596.8">
    <molecule id="Q8C0D9-2"/>
    <property type="protein sequence ID" value="ENSMUSP00000105225.2"/>
    <property type="gene ID" value="ENSMUSG00000044066.15"/>
</dbReference>
<dbReference type="GeneID" id="216543"/>
<dbReference type="KEGG" id="mmu:216543"/>
<dbReference type="UCSC" id="uc007icw.1">
    <molecule id="Q8C0D9-1"/>
    <property type="organism name" value="mouse"/>
</dbReference>
<dbReference type="UCSC" id="uc007icx.1">
    <molecule id="Q8C0D9-2"/>
    <property type="organism name" value="mouse"/>
</dbReference>
<dbReference type="AGR" id="MGI:2667663"/>
<dbReference type="CTD" id="23177"/>
<dbReference type="MGI" id="MGI:2667663">
    <property type="gene designation" value="Cep68"/>
</dbReference>
<dbReference type="VEuPathDB" id="HostDB:ENSMUSG00000044066"/>
<dbReference type="eggNOG" id="ENOG502RK93">
    <property type="taxonomic scope" value="Eukaryota"/>
</dbReference>
<dbReference type="GeneTree" id="ENSGT00810000125473"/>
<dbReference type="HOGENOM" id="CLU_370860_0_0_1"/>
<dbReference type="InParanoid" id="Q8C0D9"/>
<dbReference type="OMA" id="WDRGWPL"/>
<dbReference type="OrthoDB" id="9448174at2759"/>
<dbReference type="PhylomeDB" id="Q8C0D9"/>
<dbReference type="TreeFam" id="TF333570"/>
<dbReference type="BioGRID-ORCS" id="216543">
    <property type="hits" value="1 hit in 77 CRISPR screens"/>
</dbReference>
<dbReference type="ChiTaRS" id="Cep68">
    <property type="organism name" value="mouse"/>
</dbReference>
<dbReference type="PRO" id="PR:Q8C0D9"/>
<dbReference type="Proteomes" id="UP000000589">
    <property type="component" value="Chromosome 11"/>
</dbReference>
<dbReference type="RNAct" id="Q8C0D9">
    <property type="molecule type" value="protein"/>
</dbReference>
<dbReference type="Bgee" id="ENSMUSG00000044066">
    <property type="expression patterns" value="Expressed in brain blood vessel and 255 other cell types or tissues"/>
</dbReference>
<dbReference type="ExpressionAtlas" id="Q8C0D9">
    <property type="expression patterns" value="baseline and differential"/>
</dbReference>
<dbReference type="GO" id="GO:0030054">
    <property type="term" value="C:cell junction"/>
    <property type="evidence" value="ECO:0007669"/>
    <property type="project" value="Ensembl"/>
</dbReference>
<dbReference type="GO" id="GO:0034451">
    <property type="term" value="C:centriolar satellite"/>
    <property type="evidence" value="ECO:0007669"/>
    <property type="project" value="Ensembl"/>
</dbReference>
<dbReference type="GO" id="GO:0005813">
    <property type="term" value="C:centrosome"/>
    <property type="evidence" value="ECO:0000250"/>
    <property type="project" value="UniProtKB"/>
</dbReference>
<dbReference type="GO" id="GO:0036064">
    <property type="term" value="C:ciliary basal body"/>
    <property type="evidence" value="ECO:0007669"/>
    <property type="project" value="Ensembl"/>
</dbReference>
<dbReference type="GO" id="GO:0005829">
    <property type="term" value="C:cytosol"/>
    <property type="evidence" value="ECO:0007669"/>
    <property type="project" value="Ensembl"/>
</dbReference>
<dbReference type="GO" id="GO:0005654">
    <property type="term" value="C:nucleoplasm"/>
    <property type="evidence" value="ECO:0007669"/>
    <property type="project" value="Ensembl"/>
</dbReference>
<dbReference type="GO" id="GO:0019904">
    <property type="term" value="F:protein domain specific binding"/>
    <property type="evidence" value="ECO:0007669"/>
    <property type="project" value="Ensembl"/>
</dbReference>
<dbReference type="GO" id="GO:0019901">
    <property type="term" value="F:protein kinase binding"/>
    <property type="evidence" value="ECO:0007669"/>
    <property type="project" value="Ensembl"/>
</dbReference>
<dbReference type="GO" id="GO:0010457">
    <property type="term" value="P:centriole-centriole cohesion"/>
    <property type="evidence" value="ECO:0007669"/>
    <property type="project" value="Ensembl"/>
</dbReference>
<dbReference type="GO" id="GO:0007098">
    <property type="term" value="P:centrosome cycle"/>
    <property type="evidence" value="ECO:0000250"/>
    <property type="project" value="UniProtKB"/>
</dbReference>
<dbReference type="GO" id="GO:0033365">
    <property type="term" value="P:protein localization to organelle"/>
    <property type="evidence" value="ECO:0007669"/>
    <property type="project" value="Ensembl"/>
</dbReference>
<dbReference type="FunFam" id="1.20.58.60:FF:000296">
    <property type="entry name" value="centrosomal protein of 68 kDa"/>
    <property type="match status" value="1"/>
</dbReference>
<dbReference type="Gene3D" id="1.20.58.60">
    <property type="match status" value="1"/>
</dbReference>
<dbReference type="SUPFAM" id="SSF46966">
    <property type="entry name" value="Spectrin repeat"/>
    <property type="match status" value="1"/>
</dbReference>
<reference key="1">
    <citation type="journal article" date="2005" name="Science">
        <title>The transcriptional landscape of the mammalian genome.</title>
        <authorList>
            <person name="Carninci P."/>
            <person name="Kasukawa T."/>
            <person name="Katayama S."/>
            <person name="Gough J."/>
            <person name="Frith M.C."/>
            <person name="Maeda N."/>
            <person name="Oyama R."/>
            <person name="Ravasi T."/>
            <person name="Lenhard B."/>
            <person name="Wells C."/>
            <person name="Kodzius R."/>
            <person name="Shimokawa K."/>
            <person name="Bajic V.B."/>
            <person name="Brenner S.E."/>
            <person name="Batalov S."/>
            <person name="Forrest A.R."/>
            <person name="Zavolan M."/>
            <person name="Davis M.J."/>
            <person name="Wilming L.G."/>
            <person name="Aidinis V."/>
            <person name="Allen J.E."/>
            <person name="Ambesi-Impiombato A."/>
            <person name="Apweiler R."/>
            <person name="Aturaliya R.N."/>
            <person name="Bailey T.L."/>
            <person name="Bansal M."/>
            <person name="Baxter L."/>
            <person name="Beisel K.W."/>
            <person name="Bersano T."/>
            <person name="Bono H."/>
            <person name="Chalk A.M."/>
            <person name="Chiu K.P."/>
            <person name="Choudhary V."/>
            <person name="Christoffels A."/>
            <person name="Clutterbuck D.R."/>
            <person name="Crowe M.L."/>
            <person name="Dalla E."/>
            <person name="Dalrymple B.P."/>
            <person name="de Bono B."/>
            <person name="Della Gatta G."/>
            <person name="di Bernardo D."/>
            <person name="Down T."/>
            <person name="Engstrom P."/>
            <person name="Fagiolini M."/>
            <person name="Faulkner G."/>
            <person name="Fletcher C.F."/>
            <person name="Fukushima T."/>
            <person name="Furuno M."/>
            <person name="Futaki S."/>
            <person name="Gariboldi M."/>
            <person name="Georgii-Hemming P."/>
            <person name="Gingeras T.R."/>
            <person name="Gojobori T."/>
            <person name="Green R.E."/>
            <person name="Gustincich S."/>
            <person name="Harbers M."/>
            <person name="Hayashi Y."/>
            <person name="Hensch T.K."/>
            <person name="Hirokawa N."/>
            <person name="Hill D."/>
            <person name="Huminiecki L."/>
            <person name="Iacono M."/>
            <person name="Ikeo K."/>
            <person name="Iwama A."/>
            <person name="Ishikawa T."/>
            <person name="Jakt M."/>
            <person name="Kanapin A."/>
            <person name="Katoh M."/>
            <person name="Kawasawa Y."/>
            <person name="Kelso J."/>
            <person name="Kitamura H."/>
            <person name="Kitano H."/>
            <person name="Kollias G."/>
            <person name="Krishnan S.P."/>
            <person name="Kruger A."/>
            <person name="Kummerfeld S.K."/>
            <person name="Kurochkin I.V."/>
            <person name="Lareau L.F."/>
            <person name="Lazarevic D."/>
            <person name="Lipovich L."/>
            <person name="Liu J."/>
            <person name="Liuni S."/>
            <person name="McWilliam S."/>
            <person name="Madan Babu M."/>
            <person name="Madera M."/>
            <person name="Marchionni L."/>
            <person name="Matsuda H."/>
            <person name="Matsuzawa S."/>
            <person name="Miki H."/>
            <person name="Mignone F."/>
            <person name="Miyake S."/>
            <person name="Morris K."/>
            <person name="Mottagui-Tabar S."/>
            <person name="Mulder N."/>
            <person name="Nakano N."/>
            <person name="Nakauchi H."/>
            <person name="Ng P."/>
            <person name="Nilsson R."/>
            <person name="Nishiguchi S."/>
            <person name="Nishikawa S."/>
            <person name="Nori F."/>
            <person name="Ohara O."/>
            <person name="Okazaki Y."/>
            <person name="Orlando V."/>
            <person name="Pang K.C."/>
            <person name="Pavan W.J."/>
            <person name="Pavesi G."/>
            <person name="Pesole G."/>
            <person name="Petrovsky N."/>
            <person name="Piazza S."/>
            <person name="Reed J."/>
            <person name="Reid J.F."/>
            <person name="Ring B.Z."/>
            <person name="Ringwald M."/>
            <person name="Rost B."/>
            <person name="Ruan Y."/>
            <person name="Salzberg S.L."/>
            <person name="Sandelin A."/>
            <person name="Schneider C."/>
            <person name="Schoenbach C."/>
            <person name="Sekiguchi K."/>
            <person name="Semple C.A."/>
            <person name="Seno S."/>
            <person name="Sessa L."/>
            <person name="Sheng Y."/>
            <person name="Shibata Y."/>
            <person name="Shimada H."/>
            <person name="Shimada K."/>
            <person name="Silva D."/>
            <person name="Sinclair B."/>
            <person name="Sperling S."/>
            <person name="Stupka E."/>
            <person name="Sugiura K."/>
            <person name="Sultana R."/>
            <person name="Takenaka Y."/>
            <person name="Taki K."/>
            <person name="Tammoja K."/>
            <person name="Tan S.L."/>
            <person name="Tang S."/>
            <person name="Taylor M.S."/>
            <person name="Tegner J."/>
            <person name="Teichmann S.A."/>
            <person name="Ueda H.R."/>
            <person name="van Nimwegen E."/>
            <person name="Verardo R."/>
            <person name="Wei C.L."/>
            <person name="Yagi K."/>
            <person name="Yamanishi H."/>
            <person name="Zabarovsky E."/>
            <person name="Zhu S."/>
            <person name="Zimmer A."/>
            <person name="Hide W."/>
            <person name="Bult C."/>
            <person name="Grimmond S.M."/>
            <person name="Teasdale R.D."/>
            <person name="Liu E.T."/>
            <person name="Brusic V."/>
            <person name="Quackenbush J."/>
            <person name="Wahlestedt C."/>
            <person name="Mattick J.S."/>
            <person name="Hume D.A."/>
            <person name="Kai C."/>
            <person name="Sasaki D."/>
            <person name="Tomaru Y."/>
            <person name="Fukuda S."/>
            <person name="Kanamori-Katayama M."/>
            <person name="Suzuki M."/>
            <person name="Aoki J."/>
            <person name="Arakawa T."/>
            <person name="Iida J."/>
            <person name="Imamura K."/>
            <person name="Itoh M."/>
            <person name="Kato T."/>
            <person name="Kawaji H."/>
            <person name="Kawagashira N."/>
            <person name="Kawashima T."/>
            <person name="Kojima M."/>
            <person name="Kondo S."/>
            <person name="Konno H."/>
            <person name="Nakano K."/>
            <person name="Ninomiya N."/>
            <person name="Nishio T."/>
            <person name="Okada M."/>
            <person name="Plessy C."/>
            <person name="Shibata K."/>
            <person name="Shiraki T."/>
            <person name="Suzuki S."/>
            <person name="Tagami M."/>
            <person name="Waki K."/>
            <person name="Watahiki A."/>
            <person name="Okamura-Oho Y."/>
            <person name="Suzuki H."/>
            <person name="Kawai J."/>
            <person name="Hayashizaki Y."/>
        </authorList>
    </citation>
    <scope>NUCLEOTIDE SEQUENCE [LARGE SCALE MRNA] (ISOFORM 1)</scope>
    <source>
        <strain>C57BL/6J</strain>
        <tissue>Head</tissue>
        <tissue>Testis</tissue>
    </source>
</reference>
<reference key="2">
    <citation type="journal article" date="2009" name="PLoS Biol.">
        <title>Lineage-specific biology revealed by a finished genome assembly of the mouse.</title>
        <authorList>
            <person name="Church D.M."/>
            <person name="Goodstadt L."/>
            <person name="Hillier L.W."/>
            <person name="Zody M.C."/>
            <person name="Goldstein S."/>
            <person name="She X."/>
            <person name="Bult C.J."/>
            <person name="Agarwala R."/>
            <person name="Cherry J.L."/>
            <person name="DiCuccio M."/>
            <person name="Hlavina W."/>
            <person name="Kapustin Y."/>
            <person name="Meric P."/>
            <person name="Maglott D."/>
            <person name="Birtle Z."/>
            <person name="Marques A.C."/>
            <person name="Graves T."/>
            <person name="Zhou S."/>
            <person name="Teague B."/>
            <person name="Potamousis K."/>
            <person name="Churas C."/>
            <person name="Place M."/>
            <person name="Herschleb J."/>
            <person name="Runnheim R."/>
            <person name="Forrest D."/>
            <person name="Amos-Landgraf J."/>
            <person name="Schwartz D.C."/>
            <person name="Cheng Z."/>
            <person name="Lindblad-Toh K."/>
            <person name="Eichler E.E."/>
            <person name="Ponting C.P."/>
        </authorList>
    </citation>
    <scope>NUCLEOTIDE SEQUENCE [LARGE SCALE GENOMIC DNA]</scope>
    <source>
        <strain>C57BL/6J</strain>
    </source>
</reference>
<reference key="3">
    <citation type="journal article" date="2004" name="Genome Res.">
        <title>The status, quality, and expansion of the NIH full-length cDNA project: the Mammalian Gene Collection (MGC).</title>
        <authorList>
            <consortium name="The MGC Project Team"/>
        </authorList>
    </citation>
    <scope>NUCLEOTIDE SEQUENCE [LARGE SCALE MRNA] (ISOFORM 2)</scope>
    <source>
        <strain>129</strain>
        <tissue>Mammary gland</tissue>
    </source>
</reference>
<reference key="4">
    <citation type="journal article" date="2010" name="Cell">
        <title>A tissue-specific atlas of mouse protein phosphorylation and expression.</title>
        <authorList>
            <person name="Huttlin E.L."/>
            <person name="Jedrychowski M.P."/>
            <person name="Elias J.E."/>
            <person name="Goswami T."/>
            <person name="Rad R."/>
            <person name="Beausoleil S.A."/>
            <person name="Villen J."/>
            <person name="Haas W."/>
            <person name="Sowa M.E."/>
            <person name="Gygi S.P."/>
        </authorList>
    </citation>
    <scope>PHOSPHORYLATION [LARGE SCALE ANALYSIS] AT SER-453 AND SER-459</scope>
    <scope>IDENTIFICATION BY MASS SPECTROMETRY [LARGE SCALE ANALYSIS]</scope>
    <source>
        <tissue>Kidney</tissue>
    </source>
</reference>
<organism>
    <name type="scientific">Mus musculus</name>
    <name type="common">Mouse</name>
    <dbReference type="NCBI Taxonomy" id="10090"/>
    <lineage>
        <taxon>Eukaryota</taxon>
        <taxon>Metazoa</taxon>
        <taxon>Chordata</taxon>
        <taxon>Craniata</taxon>
        <taxon>Vertebrata</taxon>
        <taxon>Euteleostomi</taxon>
        <taxon>Mammalia</taxon>
        <taxon>Eutheria</taxon>
        <taxon>Euarchontoglires</taxon>
        <taxon>Glires</taxon>
        <taxon>Rodentia</taxon>
        <taxon>Myomorpha</taxon>
        <taxon>Muroidea</taxon>
        <taxon>Muridae</taxon>
        <taxon>Murinae</taxon>
        <taxon>Mus</taxon>
        <taxon>Mus</taxon>
    </lineage>
</organism>
<gene>
    <name type="primary">Cep68</name>
</gene>
<feature type="chain" id="PRO_0000089495" description="Centrosomal protein of 68 kDa">
    <location>
        <begin position="1"/>
        <end position="733"/>
    </location>
</feature>
<feature type="region of interest" description="Disordered" evidence="3">
    <location>
        <begin position="71"/>
        <end position="92"/>
    </location>
</feature>
<feature type="region of interest" description="Disordered" evidence="3">
    <location>
        <begin position="150"/>
        <end position="207"/>
    </location>
</feature>
<feature type="region of interest" description="Disordered" evidence="3">
    <location>
        <begin position="222"/>
        <end position="244"/>
    </location>
</feature>
<feature type="region of interest" description="Disordered" evidence="3">
    <location>
        <begin position="420"/>
        <end position="442"/>
    </location>
</feature>
<feature type="region of interest" description="Disordered" evidence="3">
    <location>
        <begin position="497"/>
        <end position="571"/>
    </location>
</feature>
<feature type="compositionally biased region" description="Basic and acidic residues" evidence="3">
    <location>
        <begin position="71"/>
        <end position="80"/>
    </location>
</feature>
<feature type="compositionally biased region" description="Low complexity" evidence="3">
    <location>
        <begin position="178"/>
        <end position="190"/>
    </location>
</feature>
<feature type="compositionally biased region" description="Polar residues" evidence="3">
    <location>
        <begin position="231"/>
        <end position="241"/>
    </location>
</feature>
<feature type="compositionally biased region" description="Polar residues" evidence="3">
    <location>
        <begin position="540"/>
        <end position="569"/>
    </location>
</feature>
<feature type="modified residue" description="Phosphoserine" evidence="2">
    <location>
        <position position="315"/>
    </location>
</feature>
<feature type="modified residue" description="Phosphoserine" evidence="6">
    <location>
        <position position="453"/>
    </location>
</feature>
<feature type="modified residue" description="Phosphoserine" evidence="6">
    <location>
        <position position="459"/>
    </location>
</feature>
<feature type="splice variant" id="VSP_013477" description="In isoform 2." evidence="4">
    <original>QFKKDVDEHQSLTESVLEKGEILLQCLLDNTPVLKDVLERIAKQSGELESRADHLYDSILASLDMLAGCTLIPDNRPTAAEHPHEGL</original>
    <variation>VICSPGLFIHGDGS</variation>
    <location>
        <begin position="647"/>
        <end position="733"/>
    </location>
</feature>
<feature type="sequence conflict" description="In Ref. 1; BAC27484." evidence="5" ref="1">
    <original>P</original>
    <variation>Q</variation>
    <location>
        <position position="228"/>
    </location>
</feature>
<protein>
    <recommendedName>
        <fullName>Centrosomal protein of 68 kDa</fullName>
        <shortName>Cep68</shortName>
    </recommendedName>
</protein>
<comment type="function">
    <text evidence="2">Involved in maintenance of centrosome cohesion, probably as part of a linker structure which prevents centrosome splitting. Required for localization of CDK5RAP2 to the centrosome during interphase. Contributes to CROCC/rootletin filament formation.</text>
</comment>
<comment type="subunit">
    <text evidence="2">Interacts with CNTLN; the interaction recruits CEP68 to the centrosome. Interacts with the SCF(FBXW11) complex which contains SKP1, CUL1 and FBXW11; the interaction is probably mediated by FBXW11 and the complex also contains CDK5RAP2 and PCNT. Also interacts with F-box protein BTRC. Interacts with serine/threonine-protein kinase PLK1; the interaction leads to phosphorylation of CEP68 and its subsequent degradation. Interacts with NEK2; the interaction leads to phosphorylation of CEP68.</text>
</comment>
<comment type="subcellular location">
    <subcellularLocation>
        <location evidence="1">Cytoplasm</location>
        <location evidence="1">Cytoskeleton</location>
        <location evidence="1">Microtubule organizing center</location>
        <location evidence="1">Centrosome</location>
    </subcellularLocation>
    <text evidence="2">Localizes to thin fibers protruding away from the proximal ends of the two centrioles. Dissociates from interphase centrosomes at the onset of mitosis.</text>
</comment>
<comment type="alternative products">
    <event type="alternative splicing"/>
    <isoform>
        <id>Q8C0D9-1</id>
        <name>1</name>
        <sequence type="displayed"/>
    </isoform>
    <isoform>
        <id>Q8C0D9-2</id>
        <name>2</name>
        <sequence type="described" ref="VSP_013477"/>
    </isoform>
</comment>
<comment type="PTM">
    <text evidence="2">Phosphorylation by PLK1 is required for binding to BTRC in prometaphase. Phosphorylated directly or indirectly by NEK2. NEK2-mediated phosphorylation promotes CEP68 dissociation from the centrosome and its degradation at the onset of mitosis.</text>
</comment>
<comment type="PTM">
    <text evidence="2">Ubiquitinated and targeted for proteasomal degradation in early mitosis by the SCF(BTRC) and/or SCF(FBXW11) E3 ubiquitin-protein ligase complexes. Degradation is complete by prometaphase and is required for removal of CDK5RAP2 from the peripheral pericentriolar material and subsequent centriole separation.</text>
</comment>
<name>CEP68_MOUSE</name>
<proteinExistence type="evidence at protein level"/>
<evidence type="ECO:0000250" key="1"/>
<evidence type="ECO:0000250" key="2">
    <source>
        <dbReference type="UniProtKB" id="Q76N32"/>
    </source>
</evidence>
<evidence type="ECO:0000256" key="3">
    <source>
        <dbReference type="SAM" id="MobiDB-lite"/>
    </source>
</evidence>
<evidence type="ECO:0000303" key="4">
    <source>
    </source>
</evidence>
<evidence type="ECO:0000305" key="5"/>
<evidence type="ECO:0007744" key="6">
    <source>
    </source>
</evidence>
<accession>Q8C0D9</accession>
<accession>Q3US49</accession>
<accession>Q5SW85</accession>
<accession>Q8R2V0</accession>
<keyword id="KW-0025">Alternative splicing</keyword>
<keyword id="KW-0963">Cytoplasm</keyword>
<keyword id="KW-0206">Cytoskeleton</keyword>
<keyword id="KW-0597">Phosphoprotein</keyword>
<keyword id="KW-1185">Reference proteome</keyword>
<keyword id="KW-0832">Ubl conjugation</keyword>